<sequence length="520" mass="56222">MNTTVSNQTPHIRIFDTTLRDGEQSPGCSMTPQQKLVMARALDALGVDIIETGFPASSYSDREAVAMMGRELRRPTLAVLSRCLQADIEISARALEAAANPRLHVFLSTSPLHREHKLRMSREQVLESVHKHVTLARGYIDDIEFSAEDATRTEEDFLAEVTRVAIAAGATTINLPDTVGFTTPEEIRGMFSRLIASVEGAEKVIFSTHCHNDLGLAAANSLAAIEGGARQVECTINGIGERAGNCALEEITMALKVRGAFYNLDTAINTPRIVSTSQLLQRLVGMPVQRNKAVVGGNAFAHESGIHQHGMLRHRGTYEIMRPEDVGWESSQMVLGRHSGRAAVEQRLRALGYLLEEDEAKLVFEQFKALCEKQRVVTDADLQALMQDATVQEGYRLASMTISDVGSRANALVELSDPDGNRVAETAQGNGPVDALFGALASATGVKLELDSYQVHSVGIGADARGEASLSVRHDGVEYEGTGTSKDIIEASALAWLDVANRLLRQRERGVVAGKTAAVA</sequence>
<protein>
    <recommendedName>
        <fullName evidence="1">2-isopropylmalate synthase</fullName>
        <ecNumber evidence="1">2.3.3.13</ecNumber>
    </recommendedName>
    <alternativeName>
        <fullName evidence="1">Alpha-IPM synthase</fullName>
    </alternativeName>
    <alternativeName>
        <fullName evidence="1">Alpha-isopropylmalate synthase</fullName>
    </alternativeName>
</protein>
<evidence type="ECO:0000255" key="1">
    <source>
        <dbReference type="HAMAP-Rule" id="MF_01025"/>
    </source>
</evidence>
<reference key="1">
    <citation type="journal article" date="2002" name="Nature">
        <title>Comparison of the genomes of two Xanthomonas pathogens with differing host specificities.</title>
        <authorList>
            <person name="da Silva A.C.R."/>
            <person name="Ferro J.A."/>
            <person name="Reinach F.C."/>
            <person name="Farah C.S."/>
            <person name="Furlan L.R."/>
            <person name="Quaggio R.B."/>
            <person name="Monteiro-Vitorello C.B."/>
            <person name="Van Sluys M.A."/>
            <person name="Almeida N.F. Jr."/>
            <person name="Alves L.M.C."/>
            <person name="do Amaral A.M."/>
            <person name="Bertolini M.C."/>
            <person name="Camargo L.E.A."/>
            <person name="Camarotte G."/>
            <person name="Cannavan F."/>
            <person name="Cardozo J."/>
            <person name="Chambergo F."/>
            <person name="Ciapina L.P."/>
            <person name="Cicarelli R.M.B."/>
            <person name="Coutinho L.L."/>
            <person name="Cursino-Santos J.R."/>
            <person name="El-Dorry H."/>
            <person name="Faria J.B."/>
            <person name="Ferreira A.J.S."/>
            <person name="Ferreira R.C.C."/>
            <person name="Ferro M.I.T."/>
            <person name="Formighieri E.F."/>
            <person name="Franco M.C."/>
            <person name="Greggio C.C."/>
            <person name="Gruber A."/>
            <person name="Katsuyama A.M."/>
            <person name="Kishi L.T."/>
            <person name="Leite R.P."/>
            <person name="Lemos E.G.M."/>
            <person name="Lemos M.V.F."/>
            <person name="Locali E.C."/>
            <person name="Machado M.A."/>
            <person name="Madeira A.M.B.N."/>
            <person name="Martinez-Rossi N.M."/>
            <person name="Martins E.C."/>
            <person name="Meidanis J."/>
            <person name="Menck C.F.M."/>
            <person name="Miyaki C.Y."/>
            <person name="Moon D.H."/>
            <person name="Moreira L.M."/>
            <person name="Novo M.T.M."/>
            <person name="Okura V.K."/>
            <person name="Oliveira M.C."/>
            <person name="Oliveira V.R."/>
            <person name="Pereira H.A."/>
            <person name="Rossi A."/>
            <person name="Sena J.A.D."/>
            <person name="Silva C."/>
            <person name="de Souza R.F."/>
            <person name="Spinola L.A.F."/>
            <person name="Takita M.A."/>
            <person name="Tamura R.E."/>
            <person name="Teixeira E.C."/>
            <person name="Tezza R.I.D."/>
            <person name="Trindade dos Santos M."/>
            <person name="Truffi D."/>
            <person name="Tsai S.M."/>
            <person name="White F.F."/>
            <person name="Setubal J.C."/>
            <person name="Kitajima J.P."/>
        </authorList>
    </citation>
    <scope>NUCLEOTIDE SEQUENCE [LARGE SCALE GENOMIC DNA]</scope>
    <source>
        <strain>ATCC 33913 / DSM 3586 / NCPPB 528 / LMG 568 / P 25</strain>
    </source>
</reference>
<keyword id="KW-0028">Amino-acid biosynthesis</keyword>
<keyword id="KW-0100">Branched-chain amino acid biosynthesis</keyword>
<keyword id="KW-0963">Cytoplasm</keyword>
<keyword id="KW-0432">Leucine biosynthesis</keyword>
<keyword id="KW-0464">Manganese</keyword>
<keyword id="KW-0479">Metal-binding</keyword>
<keyword id="KW-1185">Reference proteome</keyword>
<keyword id="KW-0808">Transferase</keyword>
<comment type="function">
    <text evidence="1">Catalyzes the condensation of the acetyl group of acetyl-CoA with 3-methyl-2-oxobutanoate (2-ketoisovalerate) to form 3-carboxy-3-hydroxy-4-methylpentanoate (2-isopropylmalate).</text>
</comment>
<comment type="catalytic activity">
    <reaction evidence="1">
        <text>3-methyl-2-oxobutanoate + acetyl-CoA + H2O = (2S)-2-isopropylmalate + CoA + H(+)</text>
        <dbReference type="Rhea" id="RHEA:21524"/>
        <dbReference type="ChEBI" id="CHEBI:1178"/>
        <dbReference type="ChEBI" id="CHEBI:11851"/>
        <dbReference type="ChEBI" id="CHEBI:15377"/>
        <dbReference type="ChEBI" id="CHEBI:15378"/>
        <dbReference type="ChEBI" id="CHEBI:57287"/>
        <dbReference type="ChEBI" id="CHEBI:57288"/>
        <dbReference type="EC" id="2.3.3.13"/>
    </reaction>
</comment>
<comment type="cofactor">
    <cofactor evidence="1">
        <name>Mn(2+)</name>
        <dbReference type="ChEBI" id="CHEBI:29035"/>
    </cofactor>
</comment>
<comment type="pathway">
    <text evidence="1">Amino-acid biosynthesis; L-leucine biosynthesis; L-leucine from 3-methyl-2-oxobutanoate: step 1/4.</text>
</comment>
<comment type="subunit">
    <text evidence="1">Homodimer.</text>
</comment>
<comment type="subcellular location">
    <subcellularLocation>
        <location evidence="1">Cytoplasm</location>
    </subcellularLocation>
</comment>
<comment type="similarity">
    <text evidence="1">Belongs to the alpha-IPM synthase/homocitrate synthase family. LeuA type 1 subfamily.</text>
</comment>
<name>LEU1_XANCP</name>
<feature type="chain" id="PRO_0000140401" description="2-isopropylmalate synthase">
    <location>
        <begin position="1"/>
        <end position="520"/>
    </location>
</feature>
<feature type="domain" description="Pyruvate carboxyltransferase" evidence="1">
    <location>
        <begin position="12"/>
        <end position="274"/>
    </location>
</feature>
<feature type="region of interest" description="Regulatory domain" evidence="1">
    <location>
        <begin position="396"/>
        <end position="520"/>
    </location>
</feature>
<feature type="binding site" evidence="1">
    <location>
        <position position="21"/>
    </location>
    <ligand>
        <name>Mn(2+)</name>
        <dbReference type="ChEBI" id="CHEBI:29035"/>
    </ligand>
</feature>
<feature type="binding site" evidence="1">
    <location>
        <position position="209"/>
    </location>
    <ligand>
        <name>Mn(2+)</name>
        <dbReference type="ChEBI" id="CHEBI:29035"/>
    </ligand>
</feature>
<feature type="binding site" evidence="1">
    <location>
        <position position="211"/>
    </location>
    <ligand>
        <name>Mn(2+)</name>
        <dbReference type="ChEBI" id="CHEBI:29035"/>
    </ligand>
</feature>
<feature type="binding site" evidence="1">
    <location>
        <position position="245"/>
    </location>
    <ligand>
        <name>Mn(2+)</name>
        <dbReference type="ChEBI" id="CHEBI:29035"/>
    </ligand>
</feature>
<proteinExistence type="inferred from homology"/>
<organism>
    <name type="scientific">Xanthomonas campestris pv. campestris (strain ATCC 33913 / DSM 3586 / NCPPB 528 / LMG 568 / P 25)</name>
    <dbReference type="NCBI Taxonomy" id="190485"/>
    <lineage>
        <taxon>Bacteria</taxon>
        <taxon>Pseudomonadati</taxon>
        <taxon>Pseudomonadota</taxon>
        <taxon>Gammaproteobacteria</taxon>
        <taxon>Lysobacterales</taxon>
        <taxon>Lysobacteraceae</taxon>
        <taxon>Xanthomonas</taxon>
    </lineage>
</organism>
<dbReference type="EC" id="2.3.3.13" evidence="1"/>
<dbReference type="EMBL" id="AE008922">
    <property type="protein sequence ID" value="AAM42597.1"/>
    <property type="molecule type" value="Genomic_DNA"/>
</dbReference>
<dbReference type="RefSeq" id="NP_638673.1">
    <property type="nucleotide sequence ID" value="NC_003902.1"/>
</dbReference>
<dbReference type="RefSeq" id="WP_011038426.1">
    <property type="nucleotide sequence ID" value="NC_003902.1"/>
</dbReference>
<dbReference type="SMR" id="P58901"/>
<dbReference type="STRING" id="190485.XCC3327"/>
<dbReference type="EnsemblBacteria" id="AAM42597">
    <property type="protein sequence ID" value="AAM42597"/>
    <property type="gene ID" value="XCC3327"/>
</dbReference>
<dbReference type="KEGG" id="xcc:XCC3327"/>
<dbReference type="PATRIC" id="fig|190485.4.peg.3558"/>
<dbReference type="eggNOG" id="COG0119">
    <property type="taxonomic scope" value="Bacteria"/>
</dbReference>
<dbReference type="HOGENOM" id="CLU_022158_0_1_6"/>
<dbReference type="OrthoDB" id="9803573at2"/>
<dbReference type="UniPathway" id="UPA00048">
    <property type="reaction ID" value="UER00070"/>
</dbReference>
<dbReference type="Proteomes" id="UP000001010">
    <property type="component" value="Chromosome"/>
</dbReference>
<dbReference type="GO" id="GO:0005829">
    <property type="term" value="C:cytosol"/>
    <property type="evidence" value="ECO:0000318"/>
    <property type="project" value="GO_Central"/>
</dbReference>
<dbReference type="GO" id="GO:0003852">
    <property type="term" value="F:2-isopropylmalate synthase activity"/>
    <property type="evidence" value="ECO:0000318"/>
    <property type="project" value="GO_Central"/>
</dbReference>
<dbReference type="GO" id="GO:0003985">
    <property type="term" value="F:acetyl-CoA C-acetyltransferase activity"/>
    <property type="evidence" value="ECO:0007669"/>
    <property type="project" value="UniProtKB-UniRule"/>
</dbReference>
<dbReference type="GO" id="GO:0030145">
    <property type="term" value="F:manganese ion binding"/>
    <property type="evidence" value="ECO:0007669"/>
    <property type="project" value="UniProtKB-UniRule"/>
</dbReference>
<dbReference type="GO" id="GO:0009098">
    <property type="term" value="P:L-leucine biosynthetic process"/>
    <property type="evidence" value="ECO:0000318"/>
    <property type="project" value="GO_Central"/>
</dbReference>
<dbReference type="CDD" id="cd07940">
    <property type="entry name" value="DRE_TIM_IPMS"/>
    <property type="match status" value="1"/>
</dbReference>
<dbReference type="FunFam" id="1.10.238.260:FF:000001">
    <property type="entry name" value="2-isopropylmalate synthase"/>
    <property type="match status" value="1"/>
</dbReference>
<dbReference type="FunFam" id="3.20.20.70:FF:000010">
    <property type="entry name" value="2-isopropylmalate synthase"/>
    <property type="match status" value="1"/>
</dbReference>
<dbReference type="FunFam" id="3.30.160.270:FF:000003">
    <property type="entry name" value="2-isopropylmalate synthase"/>
    <property type="match status" value="1"/>
</dbReference>
<dbReference type="Gene3D" id="1.10.238.260">
    <property type="match status" value="1"/>
</dbReference>
<dbReference type="Gene3D" id="3.30.160.270">
    <property type="match status" value="1"/>
</dbReference>
<dbReference type="Gene3D" id="3.20.20.70">
    <property type="entry name" value="Aldolase class I"/>
    <property type="match status" value="1"/>
</dbReference>
<dbReference type="HAMAP" id="MF_01025">
    <property type="entry name" value="LeuA_type1"/>
    <property type="match status" value="1"/>
</dbReference>
<dbReference type="InterPro" id="IPR050073">
    <property type="entry name" value="2-IPM_HCS-like"/>
</dbReference>
<dbReference type="InterPro" id="IPR013709">
    <property type="entry name" value="2-isopropylmalate_synth_dimer"/>
</dbReference>
<dbReference type="InterPro" id="IPR002034">
    <property type="entry name" value="AIPM/Hcit_synth_CS"/>
</dbReference>
<dbReference type="InterPro" id="IPR013785">
    <property type="entry name" value="Aldolase_TIM"/>
</dbReference>
<dbReference type="InterPro" id="IPR054691">
    <property type="entry name" value="LeuA/HCS_post-cat"/>
</dbReference>
<dbReference type="InterPro" id="IPR036230">
    <property type="entry name" value="LeuA_allosteric_dom_sf"/>
</dbReference>
<dbReference type="InterPro" id="IPR005671">
    <property type="entry name" value="LeuA_bact_synth"/>
</dbReference>
<dbReference type="InterPro" id="IPR000891">
    <property type="entry name" value="PYR_CT"/>
</dbReference>
<dbReference type="NCBIfam" id="TIGR00973">
    <property type="entry name" value="leuA_bact"/>
    <property type="match status" value="1"/>
</dbReference>
<dbReference type="NCBIfam" id="NF002086">
    <property type="entry name" value="PRK00915.1-3"/>
    <property type="match status" value="1"/>
</dbReference>
<dbReference type="PANTHER" id="PTHR10277:SF9">
    <property type="entry name" value="2-ISOPROPYLMALATE SYNTHASE 1, CHLOROPLASTIC-RELATED"/>
    <property type="match status" value="1"/>
</dbReference>
<dbReference type="PANTHER" id="PTHR10277">
    <property type="entry name" value="HOMOCITRATE SYNTHASE-RELATED"/>
    <property type="match status" value="1"/>
</dbReference>
<dbReference type="Pfam" id="PF22617">
    <property type="entry name" value="HCS_D2"/>
    <property type="match status" value="1"/>
</dbReference>
<dbReference type="Pfam" id="PF00682">
    <property type="entry name" value="HMGL-like"/>
    <property type="match status" value="1"/>
</dbReference>
<dbReference type="Pfam" id="PF08502">
    <property type="entry name" value="LeuA_dimer"/>
    <property type="match status" value="1"/>
</dbReference>
<dbReference type="SMART" id="SM00917">
    <property type="entry name" value="LeuA_dimer"/>
    <property type="match status" value="1"/>
</dbReference>
<dbReference type="SUPFAM" id="SSF110921">
    <property type="entry name" value="2-isopropylmalate synthase LeuA, allosteric (dimerisation) domain"/>
    <property type="match status" value="1"/>
</dbReference>
<dbReference type="SUPFAM" id="SSF51569">
    <property type="entry name" value="Aldolase"/>
    <property type="match status" value="1"/>
</dbReference>
<dbReference type="PROSITE" id="PS00815">
    <property type="entry name" value="AIPM_HOMOCIT_SYNTH_1"/>
    <property type="match status" value="1"/>
</dbReference>
<dbReference type="PROSITE" id="PS00816">
    <property type="entry name" value="AIPM_HOMOCIT_SYNTH_2"/>
    <property type="match status" value="1"/>
</dbReference>
<dbReference type="PROSITE" id="PS50991">
    <property type="entry name" value="PYR_CT"/>
    <property type="match status" value="1"/>
</dbReference>
<accession>P58901</accession>
<gene>
    <name evidence="1" type="primary">leuA</name>
    <name type="ordered locus">XCC3327</name>
</gene>